<sequence length="97" mass="11454">MASVNRNSEIIKKLKTDKRLLEEINERRESNCLVERSNQVSLLRVQKRHFHGAYKSFTHDQVKKPVPDSDRSSWVKLSLFVHKEKRHFPPKNNAIFG</sequence>
<protein>
    <recommendedName>
        <fullName>Spermatogenesis-associated protein 45</fullName>
    </recommendedName>
</protein>
<comment type="similarity">
    <text evidence="1">Belongs to the SPATA45 family.</text>
</comment>
<proteinExistence type="inferred from homology"/>
<dbReference type="EMBL" id="BC108206">
    <property type="protein sequence ID" value="AAI08207.1"/>
    <property type="molecule type" value="mRNA"/>
</dbReference>
<dbReference type="RefSeq" id="NP_001070492.1">
    <property type="nucleotide sequence ID" value="NM_001077024.1"/>
</dbReference>
<dbReference type="SMR" id="Q32P96"/>
<dbReference type="STRING" id="9913.ENSBTAP00000013209"/>
<dbReference type="PaxDb" id="9913-ENSBTAP00000013209"/>
<dbReference type="GeneID" id="767954"/>
<dbReference type="KEGG" id="bta:767954"/>
<dbReference type="CTD" id="149643"/>
<dbReference type="eggNOG" id="ENOG502T16S">
    <property type="taxonomic scope" value="Eukaryota"/>
</dbReference>
<dbReference type="InParanoid" id="Q32P96"/>
<dbReference type="OrthoDB" id="9441981at2759"/>
<dbReference type="Proteomes" id="UP000009136">
    <property type="component" value="Unplaced"/>
</dbReference>
<dbReference type="InterPro" id="IPR038806">
    <property type="entry name" value="SPATA45"/>
</dbReference>
<dbReference type="PANTHER" id="PTHR35822">
    <property type="entry name" value="SPERMATOGENESIS-ASSOCIATED PROTEIN 45"/>
    <property type="match status" value="1"/>
</dbReference>
<dbReference type="PANTHER" id="PTHR35822:SF1">
    <property type="entry name" value="SPERMATOGENESIS-ASSOCIATED PROTEIN 45"/>
    <property type="match status" value="1"/>
</dbReference>
<evidence type="ECO:0000305" key="1"/>
<accession>Q32P96</accession>
<organism>
    <name type="scientific">Bos taurus</name>
    <name type="common">Bovine</name>
    <dbReference type="NCBI Taxonomy" id="9913"/>
    <lineage>
        <taxon>Eukaryota</taxon>
        <taxon>Metazoa</taxon>
        <taxon>Chordata</taxon>
        <taxon>Craniata</taxon>
        <taxon>Vertebrata</taxon>
        <taxon>Euteleostomi</taxon>
        <taxon>Mammalia</taxon>
        <taxon>Eutheria</taxon>
        <taxon>Laurasiatheria</taxon>
        <taxon>Artiodactyla</taxon>
        <taxon>Ruminantia</taxon>
        <taxon>Pecora</taxon>
        <taxon>Bovidae</taxon>
        <taxon>Bovinae</taxon>
        <taxon>Bos</taxon>
    </lineage>
</organism>
<keyword id="KW-1185">Reference proteome</keyword>
<gene>
    <name type="primary">SPATA45</name>
</gene>
<name>SPT45_BOVIN</name>
<feature type="chain" id="PRO_0000285784" description="Spermatogenesis-associated protein 45">
    <location>
        <begin position="1"/>
        <end position="97"/>
    </location>
</feature>
<reference key="1">
    <citation type="submission" date="2005-10" db="EMBL/GenBank/DDBJ databases">
        <authorList>
            <consortium name="NIH - Mammalian Gene Collection (MGC) project"/>
        </authorList>
    </citation>
    <scope>NUCLEOTIDE SEQUENCE [LARGE SCALE MRNA]</scope>
    <source>
        <strain>Crossbred X Angus</strain>
        <tissue>Liver</tissue>
    </source>
</reference>